<keyword id="KW-0963">Cytoplasm</keyword>
<keyword id="KW-0444">Lipid biosynthesis</keyword>
<keyword id="KW-0443">Lipid metabolism</keyword>
<keyword id="KW-0520">NAD</keyword>
<keyword id="KW-0521">NADP</keyword>
<keyword id="KW-0547">Nucleotide-binding</keyword>
<keyword id="KW-0560">Oxidoreductase</keyword>
<keyword id="KW-0594">Phospholipid biosynthesis</keyword>
<keyword id="KW-1208">Phospholipid metabolism</keyword>
<sequence>MRIAVIGAGKWGSALHLALKENHNCFISSLHQRDLEDFVSIKEALECEYLVFALSSQGMRAWLKENFINKGQKILIASKGIEDQSCQFLDEIFLDFVPKENFCVLSGPSFAAEVMQKLPTALMISGINQELCKKFASFFPDFIKTYIDNDVRGAEICGAYKNVLAIASGISDGLKLGNNARAALISRGLIEMHRFGKFFGTKEETFLGLSGAGDLFLTATSVLSRNYRVGLKLAQNQKLDSILAELNEVAEGVKTAYAIEKLAKMKGIYTPIVNEVVAIFKGKSVQEATQNLLKQND</sequence>
<organism>
    <name type="scientific">Campylobacter jejuni (strain RM1221)</name>
    <dbReference type="NCBI Taxonomy" id="195099"/>
    <lineage>
        <taxon>Bacteria</taxon>
        <taxon>Pseudomonadati</taxon>
        <taxon>Campylobacterota</taxon>
        <taxon>Epsilonproteobacteria</taxon>
        <taxon>Campylobacterales</taxon>
        <taxon>Campylobacteraceae</taxon>
        <taxon>Campylobacter</taxon>
    </lineage>
</organism>
<proteinExistence type="inferred from homology"/>
<comment type="function">
    <text evidence="1">Catalyzes the reduction of the glycolytic intermediate dihydroxyacetone phosphate (DHAP) to sn-glycerol 3-phosphate (G3P), the key precursor for phospholipid synthesis.</text>
</comment>
<comment type="catalytic activity">
    <reaction evidence="1">
        <text>sn-glycerol 3-phosphate + NAD(+) = dihydroxyacetone phosphate + NADH + H(+)</text>
        <dbReference type="Rhea" id="RHEA:11092"/>
        <dbReference type="ChEBI" id="CHEBI:15378"/>
        <dbReference type="ChEBI" id="CHEBI:57540"/>
        <dbReference type="ChEBI" id="CHEBI:57597"/>
        <dbReference type="ChEBI" id="CHEBI:57642"/>
        <dbReference type="ChEBI" id="CHEBI:57945"/>
        <dbReference type="EC" id="1.1.1.94"/>
    </reaction>
    <physiologicalReaction direction="right-to-left" evidence="1">
        <dbReference type="Rhea" id="RHEA:11094"/>
    </physiologicalReaction>
</comment>
<comment type="catalytic activity">
    <reaction evidence="1">
        <text>sn-glycerol 3-phosphate + NADP(+) = dihydroxyacetone phosphate + NADPH + H(+)</text>
        <dbReference type="Rhea" id="RHEA:11096"/>
        <dbReference type="ChEBI" id="CHEBI:15378"/>
        <dbReference type="ChEBI" id="CHEBI:57597"/>
        <dbReference type="ChEBI" id="CHEBI:57642"/>
        <dbReference type="ChEBI" id="CHEBI:57783"/>
        <dbReference type="ChEBI" id="CHEBI:58349"/>
        <dbReference type="EC" id="1.1.1.94"/>
    </reaction>
    <physiologicalReaction direction="right-to-left" evidence="1">
        <dbReference type="Rhea" id="RHEA:11098"/>
    </physiologicalReaction>
</comment>
<comment type="pathway">
    <text evidence="1">Membrane lipid metabolism; glycerophospholipid metabolism.</text>
</comment>
<comment type="subcellular location">
    <subcellularLocation>
        <location evidence="1">Cytoplasm</location>
    </subcellularLocation>
</comment>
<comment type="similarity">
    <text evidence="1">Belongs to the NAD-dependent glycerol-3-phosphate dehydrogenase family.</text>
</comment>
<accession>Q5HTR8</accession>
<reference key="1">
    <citation type="journal article" date="2005" name="PLoS Biol.">
        <title>Major structural differences and novel potential virulence mechanisms from the genomes of multiple Campylobacter species.</title>
        <authorList>
            <person name="Fouts D.E."/>
            <person name="Mongodin E.F."/>
            <person name="Mandrell R.E."/>
            <person name="Miller W.G."/>
            <person name="Rasko D.A."/>
            <person name="Ravel J."/>
            <person name="Brinkac L.M."/>
            <person name="DeBoy R.T."/>
            <person name="Parker C.T."/>
            <person name="Daugherty S.C."/>
            <person name="Dodson R.J."/>
            <person name="Durkin A.S."/>
            <person name="Madupu R."/>
            <person name="Sullivan S.A."/>
            <person name="Shetty J.U."/>
            <person name="Ayodeji M.A."/>
            <person name="Shvartsbeyn A."/>
            <person name="Schatz M.C."/>
            <person name="Badger J.H."/>
            <person name="Fraser C.M."/>
            <person name="Nelson K.E."/>
        </authorList>
    </citation>
    <scope>NUCLEOTIDE SEQUENCE [LARGE SCALE GENOMIC DNA]</scope>
    <source>
        <strain>RM1221</strain>
    </source>
</reference>
<protein>
    <recommendedName>
        <fullName evidence="1">Glycerol-3-phosphate dehydrogenase [NAD(P)+]</fullName>
        <ecNumber evidence="1">1.1.1.94</ecNumber>
    </recommendedName>
    <alternativeName>
        <fullName evidence="1">NAD(P)(+)-dependent glycerol-3-phosphate dehydrogenase</fullName>
    </alternativeName>
    <alternativeName>
        <fullName evidence="1">NAD(P)H-dependent dihydroxyacetone-phosphate reductase</fullName>
    </alternativeName>
</protein>
<feature type="chain" id="PRO_0000255293" description="Glycerol-3-phosphate dehydrogenase [NAD(P)+]">
    <location>
        <begin position="1"/>
        <end position="297"/>
    </location>
</feature>
<feature type="active site" description="Proton acceptor" evidence="1">
    <location>
        <position position="161"/>
    </location>
</feature>
<feature type="binding site" evidence="1">
    <location>
        <position position="11"/>
    </location>
    <ligand>
        <name>NADPH</name>
        <dbReference type="ChEBI" id="CHEBI:57783"/>
    </ligand>
</feature>
<feature type="binding site" evidence="1">
    <location>
        <position position="33"/>
    </location>
    <ligand>
        <name>NADPH</name>
        <dbReference type="ChEBI" id="CHEBI:57783"/>
    </ligand>
</feature>
<feature type="binding site" evidence="1">
    <location>
        <position position="79"/>
    </location>
    <ligand>
        <name>NADPH</name>
        <dbReference type="ChEBI" id="CHEBI:57783"/>
    </ligand>
</feature>
<feature type="binding site" evidence="1">
    <location>
        <position position="79"/>
    </location>
    <ligand>
        <name>sn-glycerol 3-phosphate</name>
        <dbReference type="ChEBI" id="CHEBI:57597"/>
    </ligand>
</feature>
<feature type="binding site" evidence="1">
    <location>
        <position position="107"/>
    </location>
    <ligand>
        <name>sn-glycerol 3-phosphate</name>
        <dbReference type="ChEBI" id="CHEBI:57597"/>
    </ligand>
</feature>
<feature type="binding site" evidence="1">
    <location>
        <position position="109"/>
    </location>
    <ligand>
        <name>sn-glycerol 3-phosphate</name>
        <dbReference type="ChEBI" id="CHEBI:57597"/>
    </ligand>
</feature>
<feature type="binding site" evidence="1">
    <location>
        <position position="111"/>
    </location>
    <ligand>
        <name>NADPH</name>
        <dbReference type="ChEBI" id="CHEBI:57783"/>
    </ligand>
</feature>
<feature type="binding site" evidence="1">
    <location>
        <position position="161"/>
    </location>
    <ligand>
        <name>sn-glycerol 3-phosphate</name>
        <dbReference type="ChEBI" id="CHEBI:57597"/>
    </ligand>
</feature>
<feature type="binding site" evidence="1">
    <location>
        <position position="214"/>
    </location>
    <ligand>
        <name>sn-glycerol 3-phosphate</name>
        <dbReference type="ChEBI" id="CHEBI:57597"/>
    </ligand>
</feature>
<feature type="binding site" evidence="1">
    <location>
        <position position="224"/>
    </location>
    <ligand>
        <name>sn-glycerol 3-phosphate</name>
        <dbReference type="ChEBI" id="CHEBI:57597"/>
    </ligand>
</feature>
<feature type="binding site" evidence="1">
    <location>
        <position position="225"/>
    </location>
    <ligand>
        <name>NADPH</name>
        <dbReference type="ChEBI" id="CHEBI:57783"/>
    </ligand>
</feature>
<feature type="binding site" evidence="1">
    <location>
        <position position="225"/>
    </location>
    <ligand>
        <name>sn-glycerol 3-phosphate</name>
        <dbReference type="ChEBI" id="CHEBI:57597"/>
    </ligand>
</feature>
<feature type="binding site" evidence="1">
    <location>
        <position position="226"/>
    </location>
    <ligand>
        <name>sn-glycerol 3-phosphate</name>
        <dbReference type="ChEBI" id="CHEBI:57597"/>
    </ligand>
</feature>
<feature type="binding site" evidence="1">
    <location>
        <position position="249"/>
    </location>
    <ligand>
        <name>NADPH</name>
        <dbReference type="ChEBI" id="CHEBI:57783"/>
    </ligand>
</feature>
<feature type="binding site" evidence="1">
    <location>
        <position position="251"/>
    </location>
    <ligand>
        <name>NADPH</name>
        <dbReference type="ChEBI" id="CHEBI:57783"/>
    </ligand>
</feature>
<dbReference type="EC" id="1.1.1.94" evidence="1"/>
<dbReference type="EMBL" id="CP000025">
    <property type="protein sequence ID" value="AAW35651.1"/>
    <property type="molecule type" value="Genomic_DNA"/>
</dbReference>
<dbReference type="SMR" id="Q5HTR8"/>
<dbReference type="KEGG" id="cjr:CJE1330"/>
<dbReference type="HOGENOM" id="CLU_033449_0_2_7"/>
<dbReference type="UniPathway" id="UPA00940"/>
<dbReference type="GO" id="GO:0005829">
    <property type="term" value="C:cytosol"/>
    <property type="evidence" value="ECO:0007669"/>
    <property type="project" value="TreeGrafter"/>
</dbReference>
<dbReference type="GO" id="GO:0047952">
    <property type="term" value="F:glycerol-3-phosphate dehydrogenase [NAD(P)+] activity"/>
    <property type="evidence" value="ECO:0007669"/>
    <property type="project" value="UniProtKB-UniRule"/>
</dbReference>
<dbReference type="GO" id="GO:0051287">
    <property type="term" value="F:NAD binding"/>
    <property type="evidence" value="ECO:0007669"/>
    <property type="project" value="InterPro"/>
</dbReference>
<dbReference type="GO" id="GO:0005975">
    <property type="term" value="P:carbohydrate metabolic process"/>
    <property type="evidence" value="ECO:0007669"/>
    <property type="project" value="InterPro"/>
</dbReference>
<dbReference type="GO" id="GO:0046167">
    <property type="term" value="P:glycerol-3-phosphate biosynthetic process"/>
    <property type="evidence" value="ECO:0007669"/>
    <property type="project" value="UniProtKB-UniRule"/>
</dbReference>
<dbReference type="GO" id="GO:0046168">
    <property type="term" value="P:glycerol-3-phosphate catabolic process"/>
    <property type="evidence" value="ECO:0007669"/>
    <property type="project" value="InterPro"/>
</dbReference>
<dbReference type="GO" id="GO:0006650">
    <property type="term" value="P:glycerophospholipid metabolic process"/>
    <property type="evidence" value="ECO:0007669"/>
    <property type="project" value="UniProtKB-UniRule"/>
</dbReference>
<dbReference type="GO" id="GO:0008654">
    <property type="term" value="P:phospholipid biosynthetic process"/>
    <property type="evidence" value="ECO:0007669"/>
    <property type="project" value="UniProtKB-KW"/>
</dbReference>
<dbReference type="FunFam" id="1.10.1040.10:FF:000025">
    <property type="entry name" value="Glycerol-3-phosphate dehydrogenase [NAD(P)+]"/>
    <property type="match status" value="1"/>
</dbReference>
<dbReference type="Gene3D" id="1.10.1040.10">
    <property type="entry name" value="N-(1-d-carboxylethyl)-l-norvaline Dehydrogenase, domain 2"/>
    <property type="match status" value="1"/>
</dbReference>
<dbReference type="Gene3D" id="3.40.50.720">
    <property type="entry name" value="NAD(P)-binding Rossmann-like Domain"/>
    <property type="match status" value="1"/>
</dbReference>
<dbReference type="HAMAP" id="MF_00394">
    <property type="entry name" value="NAD_Glyc3P_dehydrog"/>
    <property type="match status" value="1"/>
</dbReference>
<dbReference type="InterPro" id="IPR008927">
    <property type="entry name" value="6-PGluconate_DH-like_C_sf"/>
</dbReference>
<dbReference type="InterPro" id="IPR013328">
    <property type="entry name" value="6PGD_dom2"/>
</dbReference>
<dbReference type="InterPro" id="IPR006168">
    <property type="entry name" value="G3P_DH_NAD-dep"/>
</dbReference>
<dbReference type="InterPro" id="IPR006109">
    <property type="entry name" value="G3P_DH_NAD-dep_C"/>
</dbReference>
<dbReference type="InterPro" id="IPR011128">
    <property type="entry name" value="G3P_DH_NAD-dep_N"/>
</dbReference>
<dbReference type="InterPro" id="IPR036291">
    <property type="entry name" value="NAD(P)-bd_dom_sf"/>
</dbReference>
<dbReference type="NCBIfam" id="NF000940">
    <property type="entry name" value="PRK00094.1-2"/>
    <property type="match status" value="1"/>
</dbReference>
<dbReference type="NCBIfam" id="NF000942">
    <property type="entry name" value="PRK00094.1-4"/>
    <property type="match status" value="1"/>
</dbReference>
<dbReference type="NCBIfam" id="NF000943">
    <property type="entry name" value="PRK00094.2-1"/>
    <property type="match status" value="1"/>
</dbReference>
<dbReference type="PANTHER" id="PTHR11728">
    <property type="entry name" value="GLYCEROL-3-PHOSPHATE DEHYDROGENASE"/>
    <property type="match status" value="1"/>
</dbReference>
<dbReference type="PANTHER" id="PTHR11728:SF1">
    <property type="entry name" value="GLYCEROL-3-PHOSPHATE DEHYDROGENASE [NAD(+)] 2, CHLOROPLASTIC"/>
    <property type="match status" value="1"/>
</dbReference>
<dbReference type="Pfam" id="PF07479">
    <property type="entry name" value="NAD_Gly3P_dh_C"/>
    <property type="match status" value="1"/>
</dbReference>
<dbReference type="Pfam" id="PF01210">
    <property type="entry name" value="NAD_Gly3P_dh_N"/>
    <property type="match status" value="1"/>
</dbReference>
<dbReference type="PIRSF" id="PIRSF000114">
    <property type="entry name" value="Glycerol-3-P_dh"/>
    <property type="match status" value="1"/>
</dbReference>
<dbReference type="SUPFAM" id="SSF48179">
    <property type="entry name" value="6-phosphogluconate dehydrogenase C-terminal domain-like"/>
    <property type="match status" value="1"/>
</dbReference>
<dbReference type="SUPFAM" id="SSF51735">
    <property type="entry name" value="NAD(P)-binding Rossmann-fold domains"/>
    <property type="match status" value="1"/>
</dbReference>
<dbReference type="PROSITE" id="PS00957">
    <property type="entry name" value="NAD_G3PDH"/>
    <property type="match status" value="1"/>
</dbReference>
<evidence type="ECO:0000255" key="1">
    <source>
        <dbReference type="HAMAP-Rule" id="MF_00394"/>
    </source>
</evidence>
<gene>
    <name evidence="1" type="primary">gpsA</name>
    <name type="ordered locus">CJE1330</name>
</gene>
<name>GPDA_CAMJR</name>